<proteinExistence type="inferred from homology"/>
<feature type="chain" id="PRO_0000206184" description="Rhomboid-type serine protease 2">
    <location>
        <begin position="1"/>
        <end position="284"/>
    </location>
</feature>
<feature type="transmembrane region" description="Helical" evidence="3">
    <location>
        <begin position="17"/>
        <end position="37"/>
    </location>
</feature>
<feature type="transmembrane region" description="Helical" evidence="3">
    <location>
        <begin position="66"/>
        <end position="86"/>
    </location>
</feature>
<feature type="transmembrane region" description="Helical" evidence="3">
    <location>
        <begin position="98"/>
        <end position="118"/>
    </location>
</feature>
<feature type="transmembrane region" description="Helical" evidence="3">
    <location>
        <begin position="124"/>
        <end position="141"/>
    </location>
</feature>
<feature type="transmembrane region" description="Helical" evidence="3">
    <location>
        <begin position="160"/>
        <end position="180"/>
    </location>
</feature>
<feature type="transmembrane region" description="Helical" evidence="3">
    <location>
        <begin position="182"/>
        <end position="202"/>
    </location>
</feature>
<feature type="active site" description="Nucleophile" evidence="2">
    <location>
        <position position="128"/>
    </location>
</feature>
<feature type="active site" evidence="2">
    <location>
        <position position="187"/>
    </location>
</feature>
<sequence>MINFDEFPPKYDPSLRPPALTTGLIVFTFMLCVIKSVTSYTFESLILYPRAPLDLNLNSISLYSLFHVNFFHWICNIFTLATPLAVFETRNGTIHTGVTLNLLTVIAALQYCIVGLIFYPNTGVIGLSGIAFSLMSYMAYHESKFRPIMHTFHLSNSLEIKLYTLYVPFVVAIVFMILFPSSSLPGHLFGITTGYLLSYGYIDKLYPPSKVITTIENKLSSLINFLELIVTFYKEEESLVTRGSVGYKPLFNQDIEHGAANAASHGSSAFVGETRVLGTRESTV</sequence>
<dbReference type="EC" id="3.4.21.105" evidence="2"/>
<dbReference type="EMBL" id="AP006852">
    <property type="protein sequence ID" value="BAE44712.1"/>
    <property type="molecule type" value="Genomic_DNA"/>
</dbReference>
<dbReference type="EMBL" id="CP017629">
    <property type="protein sequence ID" value="AOW30559.1"/>
    <property type="molecule type" value="Genomic_DNA"/>
</dbReference>
<dbReference type="RefSeq" id="XP_721364.1">
    <property type="nucleotide sequence ID" value="XM_716271.1"/>
</dbReference>
<dbReference type="FunCoup" id="Q5AH12">
    <property type="interactions" value="74"/>
</dbReference>
<dbReference type="STRING" id="237561.Q5AH12"/>
<dbReference type="EnsemblFungi" id="C7_01950W_A-T">
    <property type="protein sequence ID" value="C7_01950W_A-T-p1"/>
    <property type="gene ID" value="C7_01950W_A"/>
</dbReference>
<dbReference type="GeneID" id="3636970"/>
<dbReference type="KEGG" id="cal:CAALFM_C701950WA"/>
<dbReference type="CGD" id="CAL0000190075">
    <property type="gene designation" value="orf19.13879"/>
</dbReference>
<dbReference type="VEuPathDB" id="FungiDB:C7_01950W_A"/>
<dbReference type="eggNOG" id="KOG2632">
    <property type="taxonomic scope" value="Eukaryota"/>
</dbReference>
<dbReference type="HOGENOM" id="CLU_071084_0_0_1"/>
<dbReference type="InParanoid" id="Q5AH12"/>
<dbReference type="OMA" id="NTYPIVH"/>
<dbReference type="OrthoDB" id="10257275at2759"/>
<dbReference type="Proteomes" id="UP000000559">
    <property type="component" value="Chromosome 7"/>
</dbReference>
<dbReference type="GO" id="GO:0000139">
    <property type="term" value="C:Golgi membrane"/>
    <property type="evidence" value="ECO:0007669"/>
    <property type="project" value="UniProtKB-SubCell"/>
</dbReference>
<dbReference type="GO" id="GO:0034399">
    <property type="term" value="C:nuclear periphery"/>
    <property type="evidence" value="ECO:0007669"/>
    <property type="project" value="EnsemblFungi"/>
</dbReference>
<dbReference type="GO" id="GO:0004252">
    <property type="term" value="F:serine-type endopeptidase activity"/>
    <property type="evidence" value="ECO:0000318"/>
    <property type="project" value="GO_Central"/>
</dbReference>
<dbReference type="GO" id="GO:0006508">
    <property type="term" value="P:proteolysis"/>
    <property type="evidence" value="ECO:0007669"/>
    <property type="project" value="UniProtKB-KW"/>
</dbReference>
<dbReference type="Gene3D" id="1.20.1540.10">
    <property type="entry name" value="Rhomboid-like"/>
    <property type="match status" value="1"/>
</dbReference>
<dbReference type="InterPro" id="IPR022764">
    <property type="entry name" value="Peptidase_S54_rhomboid_dom"/>
</dbReference>
<dbReference type="InterPro" id="IPR035952">
    <property type="entry name" value="Rhomboid-like_sf"/>
</dbReference>
<dbReference type="PANTHER" id="PTHR43066:SF1">
    <property type="entry name" value="RHOMBOID PROTEIN 2"/>
    <property type="match status" value="1"/>
</dbReference>
<dbReference type="PANTHER" id="PTHR43066">
    <property type="entry name" value="RHOMBOID-RELATED PROTEIN"/>
    <property type="match status" value="1"/>
</dbReference>
<dbReference type="Pfam" id="PF01694">
    <property type="entry name" value="Rhomboid"/>
    <property type="match status" value="1"/>
</dbReference>
<dbReference type="SUPFAM" id="SSF144091">
    <property type="entry name" value="Rhomboid-like"/>
    <property type="match status" value="1"/>
</dbReference>
<name>RBD2_CANAL</name>
<evidence type="ECO:0000250" key="1"/>
<evidence type="ECO:0000250" key="2">
    <source>
        <dbReference type="UniProtKB" id="O74926"/>
    </source>
</evidence>
<evidence type="ECO:0000255" key="3"/>
<evidence type="ECO:0000305" key="4"/>
<accession>Q5AH12</accession>
<accession>A0A1D8PR01</accession>
<accession>Q3MPE8</accession>
<protein>
    <recommendedName>
        <fullName evidence="4">Rhomboid-type serine protease 2</fullName>
        <ecNumber evidence="2">3.4.21.105</ecNumber>
    </recommendedName>
    <alternativeName>
        <fullName evidence="4">Rhomboid protein 2</fullName>
    </alternativeName>
</protein>
<comment type="function">
    <text evidence="2">Probable rhomboid-type serine protease that catalyzes intramembrane proteolysis.</text>
</comment>
<comment type="catalytic activity">
    <reaction evidence="2">
        <text>Cleaves type-1 transmembrane domains using a catalytic dyad composed of serine and histidine that are contributed by different transmembrane domains.</text>
        <dbReference type="EC" id="3.4.21.105"/>
    </reaction>
</comment>
<comment type="subcellular location">
    <subcellularLocation>
        <location evidence="1">Golgi apparatus membrane</location>
        <topology evidence="1">Multi-pass membrane protein</topology>
    </subcellularLocation>
    <subcellularLocation>
        <location evidence="1">Golgi apparatus</location>
        <location evidence="1">cis-Golgi network membrane</location>
        <topology evidence="1">Multi-pass membrane protein</topology>
    </subcellularLocation>
</comment>
<comment type="similarity">
    <text evidence="4">Belongs to the peptidase S54 family.</text>
</comment>
<keyword id="KW-0333">Golgi apparatus</keyword>
<keyword id="KW-0378">Hydrolase</keyword>
<keyword id="KW-0472">Membrane</keyword>
<keyword id="KW-0645">Protease</keyword>
<keyword id="KW-1185">Reference proteome</keyword>
<keyword id="KW-0720">Serine protease</keyword>
<keyword id="KW-0812">Transmembrane</keyword>
<keyword id="KW-1133">Transmembrane helix</keyword>
<reference key="1">
    <citation type="journal article" date="2005" name="Genetics">
        <title>Sequence finishing and gene mapping for Candida albicans chromosome 7 and syntenic analysis against the Saccharomyces cerevisiae genome.</title>
        <authorList>
            <person name="Chibana H."/>
            <person name="Oka N."/>
            <person name="Nakayama H."/>
            <person name="Aoyama T."/>
            <person name="Magee B.B."/>
            <person name="Magee P.T."/>
            <person name="Mikami Y."/>
        </authorList>
    </citation>
    <scope>NUCLEOTIDE SEQUENCE [LARGE SCALE GENOMIC DNA]</scope>
    <source>
        <strain>SC5314 / ATCC MYA-2876</strain>
    </source>
</reference>
<reference key="2">
    <citation type="journal article" date="2004" name="Proc. Natl. Acad. Sci. U.S.A.">
        <title>The diploid genome sequence of Candida albicans.</title>
        <authorList>
            <person name="Jones T."/>
            <person name="Federspiel N.A."/>
            <person name="Chibana H."/>
            <person name="Dungan J."/>
            <person name="Kalman S."/>
            <person name="Magee B.B."/>
            <person name="Newport G."/>
            <person name="Thorstenson Y.R."/>
            <person name="Agabian N."/>
            <person name="Magee P.T."/>
            <person name="Davis R.W."/>
            <person name="Scherer S."/>
        </authorList>
    </citation>
    <scope>NUCLEOTIDE SEQUENCE [LARGE SCALE GENOMIC DNA]</scope>
    <source>
        <strain>SC5314 / ATCC MYA-2876</strain>
    </source>
</reference>
<reference key="3">
    <citation type="journal article" date="2007" name="Genome Biol.">
        <title>Assembly of the Candida albicans genome into sixteen supercontigs aligned on the eight chromosomes.</title>
        <authorList>
            <person name="van het Hoog M."/>
            <person name="Rast T.J."/>
            <person name="Martchenko M."/>
            <person name="Grindle S."/>
            <person name="Dignard D."/>
            <person name="Hogues H."/>
            <person name="Cuomo C."/>
            <person name="Berriman M."/>
            <person name="Scherer S."/>
            <person name="Magee B.B."/>
            <person name="Whiteway M."/>
            <person name="Chibana H."/>
            <person name="Nantel A."/>
            <person name="Magee P.T."/>
        </authorList>
    </citation>
    <scope>GENOME REANNOTATION</scope>
    <source>
        <strain>SC5314 / ATCC MYA-2876</strain>
    </source>
</reference>
<reference key="4">
    <citation type="journal article" date="2013" name="Genome Biol.">
        <title>Assembly of a phased diploid Candida albicans genome facilitates allele-specific measurements and provides a simple model for repeat and indel structure.</title>
        <authorList>
            <person name="Muzzey D."/>
            <person name="Schwartz K."/>
            <person name="Weissman J.S."/>
            <person name="Sherlock G."/>
        </authorList>
    </citation>
    <scope>NUCLEOTIDE SEQUENCE [LARGE SCALE GENOMIC DNA]</scope>
    <scope>GENOME REANNOTATION</scope>
    <source>
        <strain>SC5314 / ATCC MYA-2876</strain>
    </source>
</reference>
<organism>
    <name type="scientific">Candida albicans (strain SC5314 / ATCC MYA-2876)</name>
    <name type="common">Yeast</name>
    <dbReference type="NCBI Taxonomy" id="237561"/>
    <lineage>
        <taxon>Eukaryota</taxon>
        <taxon>Fungi</taxon>
        <taxon>Dikarya</taxon>
        <taxon>Ascomycota</taxon>
        <taxon>Saccharomycotina</taxon>
        <taxon>Pichiomycetes</taxon>
        <taxon>Debaryomycetaceae</taxon>
        <taxon>Candida/Lodderomyces clade</taxon>
        <taxon>Candida</taxon>
    </lineage>
</organism>
<gene>
    <name type="primary">RBD2</name>
    <name type="ordered locus">CAALFM_C701950WA</name>
    <name type="ORF">CaJ7.0222</name>
    <name type="ORF">CaO19.13879</name>
    <name type="ORF">CaO19.6526</name>
</gene>